<reference key="1">
    <citation type="journal article" date="2005" name="Arch. Microbiol.">
        <title>The genome sequence of an anaerobic aromatic-degrading denitrifying bacterium, strain EbN1.</title>
        <authorList>
            <person name="Rabus R."/>
            <person name="Kube M."/>
            <person name="Heider J."/>
            <person name="Beck A."/>
            <person name="Heitmann K."/>
            <person name="Widdel F."/>
            <person name="Reinhardt R."/>
        </authorList>
    </citation>
    <scope>NUCLEOTIDE SEQUENCE [LARGE SCALE GENOMIC DNA]</scope>
    <source>
        <strain>DSM 19018 / LMG 30748 / EbN1</strain>
    </source>
</reference>
<name>RS3_AROAE</name>
<keyword id="KW-1185">Reference proteome</keyword>
<keyword id="KW-0687">Ribonucleoprotein</keyword>
<keyword id="KW-0689">Ribosomal protein</keyword>
<keyword id="KW-0694">RNA-binding</keyword>
<keyword id="KW-0699">rRNA-binding</keyword>
<feature type="chain" id="PRO_0000230678" description="Small ribosomal subunit protein uS3">
    <location>
        <begin position="1"/>
        <end position="278"/>
    </location>
</feature>
<feature type="domain" description="KH type-2" evidence="1">
    <location>
        <begin position="39"/>
        <end position="107"/>
    </location>
</feature>
<feature type="region of interest" description="Disordered" evidence="2">
    <location>
        <begin position="217"/>
        <end position="278"/>
    </location>
</feature>
<feature type="compositionally biased region" description="Basic and acidic residues" evidence="2">
    <location>
        <begin position="230"/>
        <end position="239"/>
    </location>
</feature>
<gene>
    <name evidence="1" type="primary">rpsC</name>
    <name type="ordered locus">AZOSEA21630</name>
    <name type="ORF">ebA3833</name>
</gene>
<comment type="function">
    <text evidence="1">Binds the lower part of the 30S subunit head. Binds mRNA in the 70S ribosome, positioning it for translation.</text>
</comment>
<comment type="subunit">
    <text evidence="1">Part of the 30S ribosomal subunit. Forms a tight complex with proteins S10 and S14.</text>
</comment>
<comment type="similarity">
    <text evidence="1">Belongs to the universal ribosomal protein uS3 family.</text>
</comment>
<protein>
    <recommendedName>
        <fullName evidence="1">Small ribosomal subunit protein uS3</fullName>
    </recommendedName>
    <alternativeName>
        <fullName evidence="3">30S ribosomal protein S3</fullName>
    </alternativeName>
</protein>
<accession>Q5P326</accession>
<organism>
    <name type="scientific">Aromatoleum aromaticum (strain DSM 19018 / LMG 30748 / EbN1)</name>
    <name type="common">Azoarcus sp. (strain EbN1)</name>
    <dbReference type="NCBI Taxonomy" id="76114"/>
    <lineage>
        <taxon>Bacteria</taxon>
        <taxon>Pseudomonadati</taxon>
        <taxon>Pseudomonadota</taxon>
        <taxon>Betaproteobacteria</taxon>
        <taxon>Rhodocyclales</taxon>
        <taxon>Rhodocyclaceae</taxon>
        <taxon>Aromatoleum</taxon>
    </lineage>
</organism>
<proteinExistence type="inferred from homology"/>
<sequence>MGQKIHPTGFRLAVTRDWNSRWFASSGDYSRMLHEDLKVRDFLKKRLAHASVGRVVIERPAKNARITLFSARPGVVIGKKGEDIELLKRELQKIMGVPVHVNIEEVRKPEVDAKLIADSIAQQLEKRIMFRRAMKRAMQNAMRLGAQGIKIMSAGRLNGAEIARTEWYREGRVPLHTLRADIDYGVSEAKTTYGIIGIKVWVYKGEMLGRNERPAVVENENEARRGRRAPRNDAGDNRGAKRPARRTGAEQAGAGDKAGTRTRKAGVDDAAAVEKEVS</sequence>
<dbReference type="EMBL" id="CR555306">
    <property type="protein sequence ID" value="CAI08288.1"/>
    <property type="molecule type" value="Genomic_DNA"/>
</dbReference>
<dbReference type="RefSeq" id="WP_011237978.1">
    <property type="nucleotide sequence ID" value="NC_006513.1"/>
</dbReference>
<dbReference type="SMR" id="Q5P326"/>
<dbReference type="STRING" id="76114.ebA3833"/>
<dbReference type="KEGG" id="eba:ebA3833"/>
<dbReference type="eggNOG" id="COG0092">
    <property type="taxonomic scope" value="Bacteria"/>
</dbReference>
<dbReference type="HOGENOM" id="CLU_058591_0_2_4"/>
<dbReference type="OrthoDB" id="9806396at2"/>
<dbReference type="Proteomes" id="UP000006552">
    <property type="component" value="Chromosome"/>
</dbReference>
<dbReference type="GO" id="GO:0022627">
    <property type="term" value="C:cytosolic small ribosomal subunit"/>
    <property type="evidence" value="ECO:0007669"/>
    <property type="project" value="TreeGrafter"/>
</dbReference>
<dbReference type="GO" id="GO:0003729">
    <property type="term" value="F:mRNA binding"/>
    <property type="evidence" value="ECO:0007669"/>
    <property type="project" value="UniProtKB-UniRule"/>
</dbReference>
<dbReference type="GO" id="GO:0019843">
    <property type="term" value="F:rRNA binding"/>
    <property type="evidence" value="ECO:0007669"/>
    <property type="project" value="UniProtKB-UniRule"/>
</dbReference>
<dbReference type="GO" id="GO:0003735">
    <property type="term" value="F:structural constituent of ribosome"/>
    <property type="evidence" value="ECO:0007669"/>
    <property type="project" value="InterPro"/>
</dbReference>
<dbReference type="GO" id="GO:0006412">
    <property type="term" value="P:translation"/>
    <property type="evidence" value="ECO:0007669"/>
    <property type="project" value="UniProtKB-UniRule"/>
</dbReference>
<dbReference type="CDD" id="cd02412">
    <property type="entry name" value="KH-II_30S_S3"/>
    <property type="match status" value="1"/>
</dbReference>
<dbReference type="FunFam" id="3.30.1140.32:FF:000001">
    <property type="entry name" value="30S ribosomal protein S3"/>
    <property type="match status" value="1"/>
</dbReference>
<dbReference type="FunFam" id="3.30.300.20:FF:000001">
    <property type="entry name" value="30S ribosomal protein S3"/>
    <property type="match status" value="1"/>
</dbReference>
<dbReference type="Gene3D" id="3.30.300.20">
    <property type="match status" value="1"/>
</dbReference>
<dbReference type="Gene3D" id="3.30.1140.32">
    <property type="entry name" value="Ribosomal protein S3, C-terminal domain"/>
    <property type="match status" value="1"/>
</dbReference>
<dbReference type="HAMAP" id="MF_01309_B">
    <property type="entry name" value="Ribosomal_uS3_B"/>
    <property type="match status" value="1"/>
</dbReference>
<dbReference type="InterPro" id="IPR004087">
    <property type="entry name" value="KH_dom"/>
</dbReference>
<dbReference type="InterPro" id="IPR015946">
    <property type="entry name" value="KH_dom-like_a/b"/>
</dbReference>
<dbReference type="InterPro" id="IPR004044">
    <property type="entry name" value="KH_dom_type_2"/>
</dbReference>
<dbReference type="InterPro" id="IPR009019">
    <property type="entry name" value="KH_sf_prok-type"/>
</dbReference>
<dbReference type="InterPro" id="IPR036419">
    <property type="entry name" value="Ribosomal_S3_C_sf"/>
</dbReference>
<dbReference type="InterPro" id="IPR005704">
    <property type="entry name" value="Ribosomal_uS3_bac-typ"/>
</dbReference>
<dbReference type="InterPro" id="IPR001351">
    <property type="entry name" value="Ribosomal_uS3_C"/>
</dbReference>
<dbReference type="InterPro" id="IPR018280">
    <property type="entry name" value="Ribosomal_uS3_CS"/>
</dbReference>
<dbReference type="NCBIfam" id="TIGR01009">
    <property type="entry name" value="rpsC_bact"/>
    <property type="match status" value="1"/>
</dbReference>
<dbReference type="PANTHER" id="PTHR11760">
    <property type="entry name" value="30S/40S RIBOSOMAL PROTEIN S3"/>
    <property type="match status" value="1"/>
</dbReference>
<dbReference type="PANTHER" id="PTHR11760:SF19">
    <property type="entry name" value="SMALL RIBOSOMAL SUBUNIT PROTEIN US3C"/>
    <property type="match status" value="1"/>
</dbReference>
<dbReference type="Pfam" id="PF07650">
    <property type="entry name" value="KH_2"/>
    <property type="match status" value="1"/>
</dbReference>
<dbReference type="Pfam" id="PF00189">
    <property type="entry name" value="Ribosomal_S3_C"/>
    <property type="match status" value="1"/>
</dbReference>
<dbReference type="SMART" id="SM00322">
    <property type="entry name" value="KH"/>
    <property type="match status" value="1"/>
</dbReference>
<dbReference type="SUPFAM" id="SSF54814">
    <property type="entry name" value="Prokaryotic type KH domain (KH-domain type II)"/>
    <property type="match status" value="1"/>
</dbReference>
<dbReference type="SUPFAM" id="SSF54821">
    <property type="entry name" value="Ribosomal protein S3 C-terminal domain"/>
    <property type="match status" value="1"/>
</dbReference>
<dbReference type="PROSITE" id="PS50823">
    <property type="entry name" value="KH_TYPE_2"/>
    <property type="match status" value="1"/>
</dbReference>
<dbReference type="PROSITE" id="PS00548">
    <property type="entry name" value="RIBOSOMAL_S3"/>
    <property type="match status" value="1"/>
</dbReference>
<evidence type="ECO:0000255" key="1">
    <source>
        <dbReference type="HAMAP-Rule" id="MF_01309"/>
    </source>
</evidence>
<evidence type="ECO:0000256" key="2">
    <source>
        <dbReference type="SAM" id="MobiDB-lite"/>
    </source>
</evidence>
<evidence type="ECO:0000305" key="3"/>